<dbReference type="EMBL" id="CH408034">
    <property type="protein sequence ID" value="EAQ84912.1"/>
    <property type="molecule type" value="Genomic_DNA"/>
</dbReference>
<dbReference type="RefSeq" id="XP_001226853.1">
    <property type="nucleotide sequence ID" value="XM_001226852.1"/>
</dbReference>
<dbReference type="SMR" id="Q2GSX8"/>
<dbReference type="FunCoup" id="Q2GSX8">
    <property type="interactions" value="1150"/>
</dbReference>
<dbReference type="STRING" id="306901.Q2GSX8"/>
<dbReference type="GeneID" id="4395169"/>
<dbReference type="VEuPathDB" id="FungiDB:CHGG_08926"/>
<dbReference type="eggNOG" id="KOG0123">
    <property type="taxonomic scope" value="Eukaryota"/>
</dbReference>
<dbReference type="HOGENOM" id="CLU_012062_22_4_1"/>
<dbReference type="InParanoid" id="Q2GSX8"/>
<dbReference type="OMA" id="QQPGFMP"/>
<dbReference type="OrthoDB" id="19742at2759"/>
<dbReference type="Proteomes" id="UP000001056">
    <property type="component" value="Unassembled WGS sequence"/>
</dbReference>
<dbReference type="GO" id="GO:0005737">
    <property type="term" value="C:cytoplasm"/>
    <property type="evidence" value="ECO:0007669"/>
    <property type="project" value="UniProtKB-SubCell"/>
</dbReference>
<dbReference type="GO" id="GO:0005634">
    <property type="term" value="C:nucleus"/>
    <property type="evidence" value="ECO:0007669"/>
    <property type="project" value="UniProtKB-SubCell"/>
</dbReference>
<dbReference type="GO" id="GO:0003723">
    <property type="term" value="F:RNA binding"/>
    <property type="evidence" value="ECO:0007669"/>
    <property type="project" value="UniProtKB-KW"/>
</dbReference>
<dbReference type="GO" id="GO:0006397">
    <property type="term" value="P:mRNA processing"/>
    <property type="evidence" value="ECO:0007669"/>
    <property type="project" value="UniProtKB-KW"/>
</dbReference>
<dbReference type="GO" id="GO:0051028">
    <property type="term" value="P:mRNA transport"/>
    <property type="evidence" value="ECO:0007669"/>
    <property type="project" value="UniProtKB-KW"/>
</dbReference>
<dbReference type="GO" id="GO:0006417">
    <property type="term" value="P:regulation of translation"/>
    <property type="evidence" value="ECO:0007669"/>
    <property type="project" value="UniProtKB-KW"/>
</dbReference>
<dbReference type="CDD" id="cd12378">
    <property type="entry name" value="RRM1_I_PABPs"/>
    <property type="match status" value="1"/>
</dbReference>
<dbReference type="CDD" id="cd12379">
    <property type="entry name" value="RRM2_I_PABPs"/>
    <property type="match status" value="1"/>
</dbReference>
<dbReference type="CDD" id="cd12380">
    <property type="entry name" value="RRM3_I_PABPs"/>
    <property type="match status" value="1"/>
</dbReference>
<dbReference type="CDD" id="cd12381">
    <property type="entry name" value="RRM4_I_PABPs"/>
    <property type="match status" value="1"/>
</dbReference>
<dbReference type="FunFam" id="1.10.1900.10:FF:000004">
    <property type="entry name" value="Polyadenylate-binding protein"/>
    <property type="match status" value="1"/>
</dbReference>
<dbReference type="FunFam" id="3.30.70.330:FF:000003">
    <property type="entry name" value="Polyadenylate-binding protein"/>
    <property type="match status" value="1"/>
</dbReference>
<dbReference type="FunFam" id="3.30.70.330:FF:000355">
    <property type="entry name" value="Polyadenylate-binding protein"/>
    <property type="match status" value="1"/>
</dbReference>
<dbReference type="FunFam" id="3.30.70.330:FF:000384">
    <property type="entry name" value="Polyadenylate-binding protein"/>
    <property type="match status" value="1"/>
</dbReference>
<dbReference type="Gene3D" id="3.30.70.330">
    <property type="match status" value="4"/>
</dbReference>
<dbReference type="Gene3D" id="1.10.1900.10">
    <property type="entry name" value="c-terminal domain of poly(a) binding protein"/>
    <property type="match status" value="1"/>
</dbReference>
<dbReference type="InterPro" id="IPR012677">
    <property type="entry name" value="Nucleotide-bd_a/b_plait_sf"/>
</dbReference>
<dbReference type="InterPro" id="IPR036053">
    <property type="entry name" value="PABP-dom"/>
</dbReference>
<dbReference type="InterPro" id="IPR002004">
    <property type="entry name" value="PABP_HYD_C"/>
</dbReference>
<dbReference type="InterPro" id="IPR034364">
    <property type="entry name" value="PABP_RRM1"/>
</dbReference>
<dbReference type="InterPro" id="IPR035979">
    <property type="entry name" value="RBD_domain_sf"/>
</dbReference>
<dbReference type="InterPro" id="IPR045305">
    <property type="entry name" value="RRM2_I_PABPs"/>
</dbReference>
<dbReference type="InterPro" id="IPR000504">
    <property type="entry name" value="RRM_dom"/>
</dbReference>
<dbReference type="InterPro" id="IPR003954">
    <property type="entry name" value="RRM_dom_euk"/>
</dbReference>
<dbReference type="PANTHER" id="PTHR24012">
    <property type="entry name" value="RNA BINDING PROTEIN"/>
    <property type="match status" value="1"/>
</dbReference>
<dbReference type="Pfam" id="PF00658">
    <property type="entry name" value="MLLE"/>
    <property type="match status" value="1"/>
</dbReference>
<dbReference type="Pfam" id="PF00076">
    <property type="entry name" value="RRM_1"/>
    <property type="match status" value="5"/>
</dbReference>
<dbReference type="SMART" id="SM00517">
    <property type="entry name" value="PolyA"/>
    <property type="match status" value="1"/>
</dbReference>
<dbReference type="SMART" id="SM00360">
    <property type="entry name" value="RRM"/>
    <property type="match status" value="4"/>
</dbReference>
<dbReference type="SMART" id="SM00361">
    <property type="entry name" value="RRM_1"/>
    <property type="match status" value="3"/>
</dbReference>
<dbReference type="SUPFAM" id="SSF63570">
    <property type="entry name" value="PABC (PABP) domain"/>
    <property type="match status" value="1"/>
</dbReference>
<dbReference type="SUPFAM" id="SSF54928">
    <property type="entry name" value="RNA-binding domain, RBD"/>
    <property type="match status" value="3"/>
</dbReference>
<dbReference type="PROSITE" id="PS51309">
    <property type="entry name" value="PABC"/>
    <property type="match status" value="1"/>
</dbReference>
<dbReference type="PROSITE" id="PS50102">
    <property type="entry name" value="RRM"/>
    <property type="match status" value="4"/>
</dbReference>
<organism>
    <name type="scientific">Chaetomium globosum (strain ATCC 6205 / CBS 148.51 / DSM 1962 / NBRC 6347 / NRRL 1970)</name>
    <name type="common">Soil fungus</name>
    <dbReference type="NCBI Taxonomy" id="306901"/>
    <lineage>
        <taxon>Eukaryota</taxon>
        <taxon>Fungi</taxon>
        <taxon>Dikarya</taxon>
        <taxon>Ascomycota</taxon>
        <taxon>Pezizomycotina</taxon>
        <taxon>Sordariomycetes</taxon>
        <taxon>Sordariomycetidae</taxon>
        <taxon>Sordariales</taxon>
        <taxon>Chaetomiaceae</taxon>
        <taxon>Chaetomium</taxon>
    </lineage>
</organism>
<sequence length="783" mass="84053">MAAPVAPGAVDQLAADLGNTSLGGGDNRAAPAINTNVAPGEYQTADPDTAGPTPSSAAPHPQSSASLYVGELDPSVTEAMLFELFSQIGSVASIRVCRDTITRRSLGYAYVNYNSTSDGEKALEELNYTLIKGRPCRIMWSQRDPALRKTGQGNVFIKNLDVAIDNKALHDTFAAFGNILSCKVAQDENGNSKGYGFVHYETDEAAAQAIKHVNNMLLNEKKVYVGYHIPKKDRQSKFEEMKANFTNIYVKNISLEATDEEFRDLFAKYGDVTSSSLARDSEGKSRGFGFVNFTTHECAAKAVEELNGKEFRGQDLYVGRAQKKHEREEELRKSYEAARLEKANKYQGVNLYIKNLADDIDDDKLRQMFSEYGPITSAKVMRDAVTEGSAEEETEGKDKENKKEGEQAAEAEGEAEGAEKKTEKKGDRRLGKSKGFGFVCFSNPDDATKAVAEMNQRMIEGKPLYVALAQRKDVRKNQLEASIQARNQLRMQQAAAQAGLPQQYMQTPVYYAPGQQPNFMPPGGRGMPFPQGGLGMPAVQGGRPGQFPPYAQQGGRGGMPPQQLPIYPLGQFPPGAYPQPNNPQFLAAIQQVQQQAAALGNGRGGPGGPGGRGMQGMPVPQGMPGGPGMAGFPPNGRPQNGNMGGRGGPGRGGNFAAGRGAPPAGPLAAGGELNASSLLQSQLTATNNPQQQKQILGENLFPKIQALQPDLAGKITGMLLEMDNAELVNLLEDEAALVAKVNEAMAVYDEYVKSQQGPGQGPAPTQGEAEAEKPKEEKAEEKA</sequence>
<reference key="1">
    <citation type="journal article" date="2015" name="Genome Announc.">
        <title>Draft genome sequence of the cellulolytic fungus Chaetomium globosum.</title>
        <authorList>
            <person name="Cuomo C.A."/>
            <person name="Untereiner W.A."/>
            <person name="Ma L.-J."/>
            <person name="Grabherr M."/>
            <person name="Birren B.W."/>
        </authorList>
    </citation>
    <scope>NUCLEOTIDE SEQUENCE [LARGE SCALE GENOMIC DNA]</scope>
    <source>
        <strain>ATCC 6205 / CBS 148.51 / DSM 1962 / NBRC 6347 / NRRL 1970</strain>
    </source>
</reference>
<protein>
    <recommendedName>
        <fullName>Polyadenylate-binding protein, cytoplasmic and nuclear</fullName>
        <shortName>PABP</shortName>
        <shortName>Poly(A)-binding protein</shortName>
    </recommendedName>
    <alternativeName>
        <fullName>Polyadenylate tail-binding protein</fullName>
    </alternativeName>
</protein>
<name>PABP_CHAGB</name>
<comment type="function">
    <text evidence="1">Binds the poly(A) tail of mRNA. Appears to be an important mediator of the multiple roles of the poly(A) tail in mRNA biogenesis, stability and translation. In the nucleus, involved in both mRNA cleavage and polyadenylation. Is also required for efficient mRNA export to the cytoplasm. Acts in concert with a poly(A)-specific nuclease (PAN) to affect poly(A) tail shortening, which may occur concomitantly with either nucleocytoplasmic mRNA transport or translational initiation. In the cytoplasm, stimulates translation initiation and regulates mRNA decay through translation termination-coupled poly(A) shortening, probably mediated by PAN (By similarity).</text>
</comment>
<comment type="subcellular location">
    <subcellularLocation>
        <location evidence="1">Cytoplasm</location>
    </subcellularLocation>
    <subcellularLocation>
        <location evidence="1">Nucleus</location>
    </subcellularLocation>
</comment>
<comment type="similarity">
    <text evidence="5">Belongs to the polyadenylate-binding protein type-1 family.</text>
</comment>
<evidence type="ECO:0000250" key="1"/>
<evidence type="ECO:0000255" key="2">
    <source>
        <dbReference type="PROSITE-ProRule" id="PRU00176"/>
    </source>
</evidence>
<evidence type="ECO:0000255" key="3">
    <source>
        <dbReference type="PROSITE-ProRule" id="PRU00641"/>
    </source>
</evidence>
<evidence type="ECO:0000256" key="4">
    <source>
        <dbReference type="SAM" id="MobiDB-lite"/>
    </source>
</evidence>
<evidence type="ECO:0000305" key="5"/>
<proteinExistence type="inferred from homology"/>
<feature type="chain" id="PRO_0000295386" description="Polyadenylate-binding protein, cytoplasmic and nuclear">
    <location>
        <begin position="1"/>
        <end position="783"/>
    </location>
</feature>
<feature type="domain" description="RRM 1" evidence="2">
    <location>
        <begin position="65"/>
        <end position="143"/>
    </location>
</feature>
<feature type="domain" description="RRM 2" evidence="2">
    <location>
        <begin position="153"/>
        <end position="230"/>
    </location>
</feature>
<feature type="domain" description="RRM 3" evidence="2">
    <location>
        <begin position="246"/>
        <end position="323"/>
    </location>
</feature>
<feature type="domain" description="RRM 4" evidence="2">
    <location>
        <begin position="349"/>
        <end position="471"/>
    </location>
</feature>
<feature type="domain" description="PABC" evidence="3">
    <location>
        <begin position="676"/>
        <end position="753"/>
    </location>
</feature>
<feature type="region of interest" description="Disordered" evidence="4">
    <location>
        <begin position="16"/>
        <end position="65"/>
    </location>
</feature>
<feature type="region of interest" description="Disordered" evidence="4">
    <location>
        <begin position="381"/>
        <end position="428"/>
    </location>
</feature>
<feature type="region of interest" description="Disordered" evidence="4">
    <location>
        <begin position="596"/>
        <end position="671"/>
    </location>
</feature>
<feature type="region of interest" description="Disordered" evidence="4">
    <location>
        <begin position="752"/>
        <end position="783"/>
    </location>
</feature>
<feature type="compositionally biased region" description="Low complexity" evidence="4">
    <location>
        <begin position="54"/>
        <end position="65"/>
    </location>
</feature>
<feature type="compositionally biased region" description="Basic and acidic residues" evidence="4">
    <location>
        <begin position="396"/>
        <end position="406"/>
    </location>
</feature>
<feature type="compositionally biased region" description="Acidic residues" evidence="4">
    <location>
        <begin position="407"/>
        <end position="416"/>
    </location>
</feature>
<feature type="compositionally biased region" description="Basic and acidic residues" evidence="4">
    <location>
        <begin position="417"/>
        <end position="428"/>
    </location>
</feature>
<feature type="compositionally biased region" description="Gly residues" evidence="4">
    <location>
        <begin position="601"/>
        <end position="614"/>
    </location>
</feature>
<feature type="compositionally biased region" description="Low complexity" evidence="4">
    <location>
        <begin position="630"/>
        <end position="641"/>
    </location>
</feature>
<feature type="compositionally biased region" description="Gly residues" evidence="4">
    <location>
        <begin position="642"/>
        <end position="655"/>
    </location>
</feature>
<feature type="compositionally biased region" description="Low complexity" evidence="4">
    <location>
        <begin position="656"/>
        <end position="671"/>
    </location>
</feature>
<feature type="compositionally biased region" description="Basic and acidic residues" evidence="4">
    <location>
        <begin position="770"/>
        <end position="783"/>
    </location>
</feature>
<keyword id="KW-0963">Cytoplasm</keyword>
<keyword id="KW-0507">mRNA processing</keyword>
<keyword id="KW-0509">mRNA transport</keyword>
<keyword id="KW-0539">Nucleus</keyword>
<keyword id="KW-1185">Reference proteome</keyword>
<keyword id="KW-0677">Repeat</keyword>
<keyword id="KW-0694">RNA-binding</keyword>
<keyword id="KW-0810">Translation regulation</keyword>
<keyword id="KW-0813">Transport</keyword>
<gene>
    <name type="primary">PAB1</name>
    <name type="ORF">CHGG_08926</name>
</gene>
<accession>Q2GSX8</accession>